<gene>
    <name evidence="1" type="primary">exd</name>
    <name type="ORF">GA21419</name>
</gene>
<evidence type="ECO:0000250" key="1">
    <source>
        <dbReference type="UniProtKB" id="P40427"/>
    </source>
</evidence>
<evidence type="ECO:0000255" key="2"/>
<evidence type="ECO:0000255" key="3">
    <source>
        <dbReference type="PROSITE-ProRule" id="PRU00108"/>
    </source>
</evidence>
<evidence type="ECO:0000255" key="4">
    <source>
        <dbReference type="PROSITE-ProRule" id="PRU01322"/>
    </source>
</evidence>
<evidence type="ECO:0000256" key="5">
    <source>
        <dbReference type="SAM" id="MobiDB-lite"/>
    </source>
</evidence>
<evidence type="ECO:0000305" key="6"/>
<evidence type="ECO:0000312" key="7">
    <source>
        <dbReference type="EMBL" id="EAL29404.1"/>
    </source>
</evidence>
<dbReference type="EMBL" id="CH475411">
    <property type="protein sequence ID" value="EAL29404.1"/>
    <property type="status" value="ALT_SEQ"/>
    <property type="molecule type" value="Genomic_DNA"/>
</dbReference>
<dbReference type="RefSeq" id="XP_001352352.1">
    <property type="nucleotide sequence ID" value="XM_001352316.3"/>
</dbReference>
<dbReference type="SMR" id="Q29CT2"/>
<dbReference type="FunCoup" id="Q29CT2">
    <property type="interactions" value="1257"/>
</dbReference>
<dbReference type="STRING" id="46245.Q29CT2"/>
<dbReference type="EnsemblMetazoa" id="FBtr0289808">
    <property type="protein sequence ID" value="FBpp0288246"/>
    <property type="gene ID" value="FBgn0081406"/>
</dbReference>
<dbReference type="eggNOG" id="KOG0774">
    <property type="taxonomic scope" value="Eukaryota"/>
</dbReference>
<dbReference type="HOGENOM" id="CLU_041153_1_1_1"/>
<dbReference type="InParanoid" id="Q29CT2"/>
<dbReference type="OMA" id="DLARQCN"/>
<dbReference type="PhylomeDB" id="Q29CT2"/>
<dbReference type="ChiTaRS" id="exd">
    <property type="organism name" value="fly"/>
</dbReference>
<dbReference type="Proteomes" id="UP000001819">
    <property type="component" value="Unplaced"/>
</dbReference>
<dbReference type="Bgee" id="FBgn0081406">
    <property type="expression patterns" value="Expressed in female reproductive system and 2 other cell types or tissues"/>
</dbReference>
<dbReference type="GO" id="GO:0005634">
    <property type="term" value="C:nucleus"/>
    <property type="evidence" value="ECO:0007669"/>
    <property type="project" value="UniProtKB-SubCell"/>
</dbReference>
<dbReference type="GO" id="GO:0005667">
    <property type="term" value="C:transcription regulator complex"/>
    <property type="evidence" value="ECO:0000250"/>
    <property type="project" value="UniProtKB"/>
</dbReference>
<dbReference type="GO" id="GO:0000987">
    <property type="term" value="F:cis-regulatory region sequence-specific DNA binding"/>
    <property type="evidence" value="ECO:0007669"/>
    <property type="project" value="UniProtKB-ARBA"/>
</dbReference>
<dbReference type="GO" id="GO:0003677">
    <property type="term" value="F:DNA binding"/>
    <property type="evidence" value="ECO:0000250"/>
    <property type="project" value="UniProtKB"/>
</dbReference>
<dbReference type="GO" id="GO:0003700">
    <property type="term" value="F:DNA-binding transcription factor activity"/>
    <property type="evidence" value="ECO:0000250"/>
    <property type="project" value="UniProtKB"/>
</dbReference>
<dbReference type="GO" id="GO:0000981">
    <property type="term" value="F:DNA-binding transcription factor activity, RNA polymerase II-specific"/>
    <property type="evidence" value="ECO:0007669"/>
    <property type="project" value="InterPro"/>
</dbReference>
<dbReference type="GO" id="GO:0048646">
    <property type="term" value="P:anatomical structure formation involved in morphogenesis"/>
    <property type="evidence" value="ECO:0007669"/>
    <property type="project" value="UniProtKB-ARBA"/>
</dbReference>
<dbReference type="GO" id="GO:0009887">
    <property type="term" value="P:animal organ morphogenesis"/>
    <property type="evidence" value="ECO:0007669"/>
    <property type="project" value="UniProtKB-ARBA"/>
</dbReference>
<dbReference type="GO" id="GO:0001654">
    <property type="term" value="P:eye development"/>
    <property type="evidence" value="ECO:0000250"/>
    <property type="project" value="UniProtKB"/>
</dbReference>
<dbReference type="GO" id="GO:0007422">
    <property type="term" value="P:peripheral nervous system development"/>
    <property type="evidence" value="ECO:0000250"/>
    <property type="project" value="UniProtKB"/>
</dbReference>
<dbReference type="GO" id="GO:0006357">
    <property type="term" value="P:regulation of transcription by RNA polymerase II"/>
    <property type="evidence" value="ECO:0000250"/>
    <property type="project" value="UniProtKB"/>
</dbReference>
<dbReference type="CDD" id="cd00086">
    <property type="entry name" value="homeodomain"/>
    <property type="match status" value="1"/>
</dbReference>
<dbReference type="FunFam" id="1.10.10.60:FF:000008">
    <property type="entry name" value="Pre-B-cell leukemia transcription factor 1"/>
    <property type="match status" value="1"/>
</dbReference>
<dbReference type="Gene3D" id="1.10.10.60">
    <property type="entry name" value="Homeodomain-like"/>
    <property type="match status" value="1"/>
</dbReference>
<dbReference type="InterPro" id="IPR001356">
    <property type="entry name" value="HD"/>
</dbReference>
<dbReference type="InterPro" id="IPR017970">
    <property type="entry name" value="Homeobox_CS"/>
</dbReference>
<dbReference type="InterPro" id="IPR009057">
    <property type="entry name" value="Homeodomain-like_sf"/>
</dbReference>
<dbReference type="InterPro" id="IPR008422">
    <property type="entry name" value="KN_HD"/>
</dbReference>
<dbReference type="InterPro" id="IPR005542">
    <property type="entry name" value="PBX_PBC_dom"/>
</dbReference>
<dbReference type="InterPro" id="IPR050224">
    <property type="entry name" value="TALE_homeobox"/>
</dbReference>
<dbReference type="PANTHER" id="PTHR11850">
    <property type="entry name" value="HOMEOBOX PROTEIN TRANSCRIPTION FACTORS"/>
    <property type="match status" value="1"/>
</dbReference>
<dbReference type="Pfam" id="PF05920">
    <property type="entry name" value="Homeobox_KN"/>
    <property type="match status" value="1"/>
</dbReference>
<dbReference type="Pfam" id="PF03792">
    <property type="entry name" value="PBC"/>
    <property type="match status" value="1"/>
</dbReference>
<dbReference type="SMART" id="SM00389">
    <property type="entry name" value="HOX"/>
    <property type="match status" value="1"/>
</dbReference>
<dbReference type="SUPFAM" id="SSF46689">
    <property type="entry name" value="Homeodomain-like"/>
    <property type="match status" value="1"/>
</dbReference>
<dbReference type="PROSITE" id="PS00027">
    <property type="entry name" value="HOMEOBOX_1"/>
    <property type="match status" value="1"/>
</dbReference>
<dbReference type="PROSITE" id="PS50071">
    <property type="entry name" value="HOMEOBOX_2"/>
    <property type="match status" value="1"/>
</dbReference>
<dbReference type="PROSITE" id="PS51978">
    <property type="entry name" value="PBC"/>
    <property type="match status" value="1"/>
</dbReference>
<reference evidence="7" key="1">
    <citation type="journal article" date="2005" name="Genome Res.">
        <title>Comparative genome sequencing of Drosophila pseudoobscura: chromosomal, gene, and cis-element evolution.</title>
        <authorList>
            <person name="Richards S."/>
            <person name="Liu Y."/>
            <person name="Bettencourt B.R."/>
            <person name="Hradecky P."/>
            <person name="Letovsky S."/>
            <person name="Nielsen R."/>
            <person name="Thornton K."/>
            <person name="Hubisz M.J."/>
            <person name="Chen R."/>
            <person name="Meisel R.P."/>
            <person name="Couronne O."/>
            <person name="Hua S."/>
            <person name="Smith M.A."/>
            <person name="Zhang P."/>
            <person name="Liu J."/>
            <person name="Bussemaker H.J."/>
            <person name="van Batenburg M.F."/>
            <person name="Howells S.L."/>
            <person name="Scherer S.E."/>
            <person name="Sodergren E."/>
            <person name="Matthews B.B."/>
            <person name="Crosby M.A."/>
            <person name="Schroeder A.J."/>
            <person name="Ortiz-Barrientos D."/>
            <person name="Rives C.M."/>
            <person name="Metzker M.L."/>
            <person name="Muzny D.M."/>
            <person name="Scott G."/>
            <person name="Steffen D."/>
            <person name="Wheeler D.A."/>
            <person name="Worley K.C."/>
            <person name="Havlak P."/>
            <person name="Durbin K.J."/>
            <person name="Egan A."/>
            <person name="Gill R."/>
            <person name="Hume J."/>
            <person name="Morgan M.B."/>
            <person name="Miner G."/>
            <person name="Hamilton C."/>
            <person name="Huang Y."/>
            <person name="Waldron L."/>
            <person name="Verduzco D."/>
            <person name="Clerc-Blankenburg K.P."/>
            <person name="Dubchak I."/>
            <person name="Noor M.A.F."/>
            <person name="Anderson W."/>
            <person name="White K.P."/>
            <person name="Clark A.G."/>
            <person name="Schaeffer S.W."/>
            <person name="Gelbart W.M."/>
            <person name="Weinstock G.M."/>
            <person name="Gibbs R.A."/>
        </authorList>
    </citation>
    <scope>NUCLEOTIDE SEQUENCE [LARGE SCALE GENOMIC DNA]</scope>
    <source>
        <strain>MV2-25 / Tucson 14011-0121.94</strain>
    </source>
</reference>
<protein>
    <recommendedName>
        <fullName>Homeobox protein extradenticle</fullName>
    </recommendedName>
</protein>
<sequence length="376" mass="41801">MEDPNRMMAHTGGMMAPQGYSLSGQDDGQNTGNENEVRKQKDIGEILQQIMSISEQSLDEAQARKHTLNCHRMKPALFSVLCEIKEKTVLSIRNTQEEEPPDPQLMRLDNMLIAEGVAGPEKGGGGAAAASAAAASQGGSLSIDGADNAIEHSDYRAKLAQIRQIYHQELEKYEQACNEFTTHVMNLLREQSRTRPITPKEIERMVQIIHKKFSSIQMQLKQSTCEAVMILRSRFLDARRKRRNFSKQASEILNEYFYSHLSNPYPSEEAKEELARKCGITVSQVSNWFGNKRIRYKKNIGKAQEEANLYAAKKAAGASPYSMAGPPSGTTTPMMSPAPPQDSMGYTMGSGGYDQQQPYDNSMGGYDPNLHQDLSP</sequence>
<accession>Q29CT2</accession>
<feature type="chain" id="PRO_0000341510" description="Homeobox protein extradenticle">
    <location>
        <begin position="1"/>
        <end position="376"/>
    </location>
</feature>
<feature type="domain" description="PBC" evidence="4">
    <location>
        <begin position="38"/>
        <end position="237"/>
    </location>
</feature>
<feature type="DNA-binding region" description="Homeobox; TALE-type" evidence="3">
    <location>
        <begin position="238"/>
        <end position="300"/>
    </location>
</feature>
<feature type="region of interest" description="Disordered" evidence="5">
    <location>
        <begin position="16"/>
        <end position="35"/>
    </location>
</feature>
<feature type="region of interest" description="PBC-A" evidence="4">
    <location>
        <begin position="45"/>
        <end position="124"/>
    </location>
</feature>
<feature type="region of interest" description="PBC-B" evidence="4">
    <location>
        <begin position="127"/>
        <end position="237"/>
    </location>
</feature>
<feature type="region of interest" description="Disordered" evidence="5">
    <location>
        <begin position="318"/>
        <end position="376"/>
    </location>
</feature>
<feature type="compositionally biased region" description="Polar residues" evidence="5">
    <location>
        <begin position="20"/>
        <end position="34"/>
    </location>
</feature>
<feature type="compositionally biased region" description="Low complexity" evidence="5">
    <location>
        <begin position="318"/>
        <end position="335"/>
    </location>
</feature>
<comment type="function">
    <text evidence="1">Transcription factor which acts with the selector homeodomain proteins altering the regulation of downstream target genes such as wingless (wg), teashirt (tsh) and decapentaplegic (dpp), thus affecting segmental identity. Delimits the eye field and prevent inappropriate eye development. Required for proper localization of chordotonal organs within the peripheral nervous system (By similarity).</text>
</comment>
<comment type="subunit">
    <text evidence="1">Interacts with Ubx and hth.</text>
</comment>
<comment type="subcellular location">
    <subcellularLocation>
        <location evidence="1 3">Nucleus</location>
    </subcellularLocation>
    <text evidence="1">Nuclear translocation requires interaction with hth.</text>
</comment>
<comment type="similarity">
    <text evidence="2">Belongs to the TALE/PBX homeobox family.</text>
</comment>
<comment type="sequence caution" evidence="6">
    <conflict type="erroneous gene model prediction">
        <sequence resource="EMBL-CDS" id="EAL29404"/>
    </conflict>
</comment>
<proteinExistence type="inferred from homology"/>
<name>EXD_DROPS</name>
<organism>
    <name type="scientific">Drosophila pseudoobscura pseudoobscura</name>
    <name type="common">Fruit fly</name>
    <dbReference type="NCBI Taxonomy" id="46245"/>
    <lineage>
        <taxon>Eukaryota</taxon>
        <taxon>Metazoa</taxon>
        <taxon>Ecdysozoa</taxon>
        <taxon>Arthropoda</taxon>
        <taxon>Hexapoda</taxon>
        <taxon>Insecta</taxon>
        <taxon>Pterygota</taxon>
        <taxon>Neoptera</taxon>
        <taxon>Endopterygota</taxon>
        <taxon>Diptera</taxon>
        <taxon>Brachycera</taxon>
        <taxon>Muscomorpha</taxon>
        <taxon>Ephydroidea</taxon>
        <taxon>Drosophilidae</taxon>
        <taxon>Drosophila</taxon>
        <taxon>Sophophora</taxon>
    </lineage>
</organism>
<keyword id="KW-0217">Developmental protein</keyword>
<keyword id="KW-0238">DNA-binding</keyword>
<keyword id="KW-0371">Homeobox</keyword>
<keyword id="KW-0539">Nucleus</keyword>
<keyword id="KW-1185">Reference proteome</keyword>
<keyword id="KW-0804">Transcription</keyword>
<keyword id="KW-0805">Transcription regulation</keyword>